<evidence type="ECO:0000255" key="1">
    <source>
        <dbReference type="HAMAP-Rule" id="MF_01618"/>
    </source>
</evidence>
<comment type="function">
    <text evidence="1">Catalyzes the final step of fatty acid oxidation in which acetyl-CoA is released and the CoA ester of a fatty acid two carbons shorter is formed.</text>
</comment>
<comment type="catalytic activity">
    <reaction evidence="1">
        <text>an acyl-CoA + acetyl-CoA = a 3-oxoacyl-CoA + CoA</text>
        <dbReference type="Rhea" id="RHEA:21564"/>
        <dbReference type="ChEBI" id="CHEBI:57287"/>
        <dbReference type="ChEBI" id="CHEBI:57288"/>
        <dbReference type="ChEBI" id="CHEBI:58342"/>
        <dbReference type="ChEBI" id="CHEBI:90726"/>
        <dbReference type="EC" id="2.3.1.16"/>
    </reaction>
</comment>
<comment type="pathway">
    <text evidence="1">Lipid metabolism; fatty acid beta-oxidation.</text>
</comment>
<comment type="subunit">
    <text evidence="1">Heterotetramer of two alpha chains (FadJ) and two beta chains (FadI).</text>
</comment>
<comment type="subcellular location">
    <subcellularLocation>
        <location evidence="1">Cytoplasm</location>
    </subcellularLocation>
</comment>
<comment type="similarity">
    <text evidence="1">Belongs to the thiolase-like superfamily. Thiolase family.</text>
</comment>
<reference key="1">
    <citation type="submission" date="2007-07" db="EMBL/GenBank/DDBJ databases">
        <title>Complete sequence of chromosome of Shewanella baltica OS185.</title>
        <authorList>
            <consortium name="US DOE Joint Genome Institute"/>
            <person name="Copeland A."/>
            <person name="Lucas S."/>
            <person name="Lapidus A."/>
            <person name="Barry K."/>
            <person name="Glavina del Rio T."/>
            <person name="Dalin E."/>
            <person name="Tice H."/>
            <person name="Pitluck S."/>
            <person name="Sims D."/>
            <person name="Brettin T."/>
            <person name="Bruce D."/>
            <person name="Detter J.C."/>
            <person name="Han C."/>
            <person name="Schmutz J."/>
            <person name="Larimer F."/>
            <person name="Land M."/>
            <person name="Hauser L."/>
            <person name="Kyrpides N."/>
            <person name="Mikhailova N."/>
            <person name="Brettar I."/>
            <person name="Rodrigues J."/>
            <person name="Konstantinidis K."/>
            <person name="Tiedje J."/>
            <person name="Richardson P."/>
        </authorList>
    </citation>
    <scope>NUCLEOTIDE SEQUENCE [LARGE SCALE GENOMIC DNA]</scope>
    <source>
        <strain>OS185</strain>
    </source>
</reference>
<dbReference type="EC" id="2.3.1.16" evidence="1"/>
<dbReference type="EMBL" id="CP000753">
    <property type="protein sequence ID" value="ABS08915.1"/>
    <property type="molecule type" value="Genomic_DNA"/>
</dbReference>
<dbReference type="RefSeq" id="WP_012089601.1">
    <property type="nucleotide sequence ID" value="NC_009665.1"/>
</dbReference>
<dbReference type="SMR" id="A6WQ26"/>
<dbReference type="KEGG" id="sbm:Shew185_2781"/>
<dbReference type="HOGENOM" id="CLU_031026_2_0_6"/>
<dbReference type="UniPathway" id="UPA00659"/>
<dbReference type="GO" id="GO:0005829">
    <property type="term" value="C:cytosol"/>
    <property type="evidence" value="ECO:0007669"/>
    <property type="project" value="TreeGrafter"/>
</dbReference>
<dbReference type="GO" id="GO:0003988">
    <property type="term" value="F:acetyl-CoA C-acyltransferase activity"/>
    <property type="evidence" value="ECO:0007669"/>
    <property type="project" value="UniProtKB-UniRule"/>
</dbReference>
<dbReference type="GO" id="GO:0006635">
    <property type="term" value="P:fatty acid beta-oxidation"/>
    <property type="evidence" value="ECO:0007669"/>
    <property type="project" value="UniProtKB-UniRule"/>
</dbReference>
<dbReference type="CDD" id="cd00751">
    <property type="entry name" value="thiolase"/>
    <property type="match status" value="1"/>
</dbReference>
<dbReference type="FunFam" id="3.40.47.10:FF:000011">
    <property type="entry name" value="3-ketoacyl-CoA thiolase"/>
    <property type="match status" value="1"/>
</dbReference>
<dbReference type="Gene3D" id="3.40.47.10">
    <property type="match status" value="1"/>
</dbReference>
<dbReference type="HAMAP" id="MF_01618">
    <property type="entry name" value="FadI"/>
    <property type="match status" value="1"/>
</dbReference>
<dbReference type="InterPro" id="IPR050521">
    <property type="entry name" value="3-ketoacyl-CoA_Thiolase"/>
</dbReference>
<dbReference type="InterPro" id="IPR012806">
    <property type="entry name" value="Ac-CoA_C-AcTrfase_FadI"/>
</dbReference>
<dbReference type="InterPro" id="IPR002155">
    <property type="entry name" value="Thiolase"/>
</dbReference>
<dbReference type="InterPro" id="IPR016039">
    <property type="entry name" value="Thiolase-like"/>
</dbReference>
<dbReference type="InterPro" id="IPR020610">
    <property type="entry name" value="Thiolase_AS"/>
</dbReference>
<dbReference type="InterPro" id="IPR020617">
    <property type="entry name" value="Thiolase_C"/>
</dbReference>
<dbReference type="InterPro" id="IPR020613">
    <property type="entry name" value="Thiolase_CS"/>
</dbReference>
<dbReference type="InterPro" id="IPR020616">
    <property type="entry name" value="Thiolase_N"/>
</dbReference>
<dbReference type="NCBIfam" id="TIGR01930">
    <property type="entry name" value="AcCoA-C-Actrans"/>
    <property type="match status" value="1"/>
</dbReference>
<dbReference type="NCBIfam" id="TIGR02446">
    <property type="entry name" value="FadI"/>
    <property type="match status" value="1"/>
</dbReference>
<dbReference type="NCBIfam" id="NF006516">
    <property type="entry name" value="PRK08963.1"/>
    <property type="match status" value="1"/>
</dbReference>
<dbReference type="PANTHER" id="PTHR42689">
    <property type="entry name" value="ACETYL-COA ACYLTRANSFERASE FADA2 (3-KETOACYL-COA THIOLASE) (BETA-KETOTHIOLASE)-RELATED"/>
    <property type="match status" value="1"/>
</dbReference>
<dbReference type="PANTHER" id="PTHR42689:SF1">
    <property type="entry name" value="ACETYL-COA ACYLTRANSFERASE FADA2 (3-KETOACYL-COA THIOLASE) (BETA-KETOTHIOLASE)-RELATED"/>
    <property type="match status" value="1"/>
</dbReference>
<dbReference type="Pfam" id="PF02803">
    <property type="entry name" value="Thiolase_C"/>
    <property type="match status" value="1"/>
</dbReference>
<dbReference type="Pfam" id="PF00108">
    <property type="entry name" value="Thiolase_N"/>
    <property type="match status" value="1"/>
</dbReference>
<dbReference type="PIRSF" id="PIRSF000429">
    <property type="entry name" value="Ac-CoA_Ac_transf"/>
    <property type="match status" value="1"/>
</dbReference>
<dbReference type="SUPFAM" id="SSF53901">
    <property type="entry name" value="Thiolase-like"/>
    <property type="match status" value="2"/>
</dbReference>
<dbReference type="PROSITE" id="PS00737">
    <property type="entry name" value="THIOLASE_2"/>
    <property type="match status" value="1"/>
</dbReference>
<dbReference type="PROSITE" id="PS00099">
    <property type="entry name" value="THIOLASE_3"/>
    <property type="match status" value="1"/>
</dbReference>
<protein>
    <recommendedName>
        <fullName evidence="1">3-ketoacyl-CoA thiolase</fullName>
        <ecNumber evidence="1">2.3.1.16</ecNumber>
    </recommendedName>
    <alternativeName>
        <fullName evidence="1">ACSs</fullName>
    </alternativeName>
    <alternativeName>
        <fullName evidence="1">Acetyl-CoA acyltransferase</fullName>
    </alternativeName>
    <alternativeName>
        <fullName evidence="1">Acyl-CoA ligase</fullName>
    </alternativeName>
    <alternativeName>
        <fullName evidence="1">Beta-ketothiolase</fullName>
    </alternativeName>
    <alternativeName>
        <fullName evidence="1">Fatty acid oxidation complex subunit beta</fullName>
    </alternativeName>
</protein>
<feature type="chain" id="PRO_1000069508" description="3-ketoacyl-CoA thiolase">
    <location>
        <begin position="1"/>
        <end position="436"/>
    </location>
</feature>
<feature type="active site" description="Acyl-thioester intermediate" evidence="1">
    <location>
        <position position="99"/>
    </location>
</feature>
<feature type="active site" description="Proton acceptor" evidence="1">
    <location>
        <position position="392"/>
    </location>
</feature>
<feature type="active site" description="Proton acceptor" evidence="1">
    <location>
        <position position="422"/>
    </location>
</feature>
<organism>
    <name type="scientific">Shewanella baltica (strain OS185)</name>
    <dbReference type="NCBI Taxonomy" id="402882"/>
    <lineage>
        <taxon>Bacteria</taxon>
        <taxon>Pseudomonadati</taxon>
        <taxon>Pseudomonadota</taxon>
        <taxon>Gammaproteobacteria</taxon>
        <taxon>Alteromonadales</taxon>
        <taxon>Shewanellaceae</taxon>
        <taxon>Shewanella</taxon>
    </lineage>
</organism>
<name>FADI_SHEB8</name>
<sequence length="436" mass="46764">MSDRQQVTNAKGERIAIVAGLRTPFAKQATAFHGVSALDMGKMVVNELLARSELDPKLIEQLVYGQVVQMPAAPNIAREIVLGTGMNVSTDAYSVTRACATSFQSAVNVAESIMTGNIEIGIAGGADSSSVLPIGVSKKLAHALVDLNKARSFGQKLQIFRRLGIKDLLPVPPAVAEYSTGLSMGQTAEQMAKTYNISRADQDALAHRSHTLASETWASGHLRDEVMVAHVPPYKQFIDRDNNIRENSVLESYAKLRPAFDKQHGTVTAANSTPLTDGASAIILMSEGRAKALGYQPIGYIKSYAFSAIDVWQDMLMGPSYATPLALKRAGMELEDLTLIEMHEAFAAQTLANMQMFASKKFAEEKLGRNRAIGEIDMSKFNVLGGSLAYGHPFAATGTRLITQVCRELKRRGGGTGLTTACAAGGLGVAMILEVE</sequence>
<proteinExistence type="inferred from homology"/>
<accession>A6WQ26</accession>
<keyword id="KW-0012">Acyltransferase</keyword>
<keyword id="KW-0963">Cytoplasm</keyword>
<keyword id="KW-0276">Fatty acid metabolism</keyword>
<keyword id="KW-0442">Lipid degradation</keyword>
<keyword id="KW-0443">Lipid metabolism</keyword>
<keyword id="KW-0808">Transferase</keyword>
<gene>
    <name evidence="1" type="primary">fadI</name>
    <name type="ordered locus">Shew185_2781</name>
</gene>